<protein>
    <recommendedName>
        <fullName>2S seed storage-like protein</fullName>
    </recommendedName>
</protein>
<comment type="similarity">
    <text evidence="3">Belongs to the 2S seed storage albumins family.</text>
</comment>
<keyword id="KW-0708">Seed storage protein</keyword>
<keyword id="KW-0732">Signal</keyword>
<keyword id="KW-0758">Storage protein</keyword>
<organism>
    <name type="scientific">Picea glauca</name>
    <name type="common">White spruce</name>
    <name type="synonym">Pinus glauca</name>
    <dbReference type="NCBI Taxonomy" id="3330"/>
    <lineage>
        <taxon>Eukaryota</taxon>
        <taxon>Viridiplantae</taxon>
        <taxon>Streptophyta</taxon>
        <taxon>Embryophyta</taxon>
        <taxon>Tracheophyta</taxon>
        <taxon>Spermatophyta</taxon>
        <taxon>Pinopsida</taxon>
        <taxon>Pinidae</taxon>
        <taxon>Conifers I</taxon>
        <taxon>Pinales</taxon>
        <taxon>Pinaceae</taxon>
        <taxon>Picea</taxon>
    </lineage>
</organism>
<name>2SSL_PICGL</name>
<dbReference type="EMBL" id="X63193">
    <property type="protein sequence ID" value="CAA44875.1"/>
    <property type="molecule type" value="mRNA"/>
</dbReference>
<dbReference type="PIR" id="S18871">
    <property type="entry name" value="S18871"/>
</dbReference>
<dbReference type="GO" id="GO:0045735">
    <property type="term" value="F:nutrient reservoir activity"/>
    <property type="evidence" value="ECO:0007669"/>
    <property type="project" value="UniProtKB-KW"/>
</dbReference>
<dbReference type="Gene3D" id="1.10.110.10">
    <property type="entry name" value="Plant lipid-transfer and hydrophobic proteins"/>
    <property type="match status" value="1"/>
</dbReference>
<dbReference type="InterPro" id="IPR036312">
    <property type="entry name" value="Bifun_inhib/LTP/seed_sf"/>
</dbReference>
<dbReference type="InterPro" id="IPR016140">
    <property type="entry name" value="Bifunc_inhib/LTP/seed_store"/>
</dbReference>
<dbReference type="InterPro" id="IPR000617">
    <property type="entry name" value="Napin/2SS/CON"/>
</dbReference>
<dbReference type="PANTHER" id="PTHR35496">
    <property type="entry name" value="2S SEED STORAGE PROTEIN 1-RELATED"/>
    <property type="match status" value="1"/>
</dbReference>
<dbReference type="PANTHER" id="PTHR35496:SF4">
    <property type="entry name" value="2S SULFUR-RICH SEED STORAGE PROTEIN 2-LIKE"/>
    <property type="match status" value="1"/>
</dbReference>
<dbReference type="Pfam" id="PF00234">
    <property type="entry name" value="Tryp_alpha_amyl"/>
    <property type="match status" value="1"/>
</dbReference>
<dbReference type="SMART" id="SM00499">
    <property type="entry name" value="AAI"/>
    <property type="match status" value="1"/>
</dbReference>
<dbReference type="SUPFAM" id="SSF47699">
    <property type="entry name" value="Bifunctional inhibitor/lipid-transfer protein/seed storage 2S albumin"/>
    <property type="match status" value="1"/>
</dbReference>
<proteinExistence type="evidence at transcript level"/>
<reference key="1">
    <citation type="submission" date="1991-11" db="EMBL/GenBank/DDBJ databases">
        <authorList>
            <person name="Newton C.H."/>
        </authorList>
    </citation>
    <scope>NUCLEOTIDE SEQUENCE [MRNA]</scope>
    <source>
        <strain>PG118</strain>
    </source>
</reference>
<evidence type="ECO:0000255" key="1"/>
<evidence type="ECO:0000256" key="2">
    <source>
        <dbReference type="SAM" id="MobiDB-lite"/>
    </source>
</evidence>
<evidence type="ECO:0000305" key="3"/>
<feature type="signal peptide" evidence="1">
    <location>
        <begin position="1"/>
        <end position="35"/>
    </location>
</feature>
<feature type="chain" id="PRO_0000032166" description="2S seed storage-like protein">
    <location>
        <begin position="36"/>
        <end position="172"/>
    </location>
</feature>
<feature type="region of interest" description="Disordered" evidence="2">
    <location>
        <begin position="108"/>
        <end position="172"/>
    </location>
</feature>
<feature type="compositionally biased region" description="Basic and acidic residues" evidence="2">
    <location>
        <begin position="151"/>
        <end position="160"/>
    </location>
</feature>
<accession>P26986</accession>
<sequence length="172" mass="20393">MGVFSPSTTRLTLKWFSLSVALFLLFHWGIPSVDGHEDNMYGEEIQQQRRSCDPQRDPQRLSSCRDYLERRREQPSERCCEELQRMSPQCRCQAIQQMLDQSLSYDSFMDSDSQEDAPLNQRRRRREGRGREEEEAMERAAYLPNTCNVREPPRRCDIQRHSRYSMTGSSFK</sequence>